<organism evidence="8">
    <name type="scientific">Lutzomyia longipalpis</name>
    <name type="common">Sand fly</name>
    <dbReference type="NCBI Taxonomy" id="7200"/>
    <lineage>
        <taxon>Eukaryota</taxon>
        <taxon>Metazoa</taxon>
        <taxon>Ecdysozoa</taxon>
        <taxon>Arthropoda</taxon>
        <taxon>Hexapoda</taxon>
        <taxon>Insecta</taxon>
        <taxon>Pterygota</taxon>
        <taxon>Neoptera</taxon>
        <taxon>Endopterygota</taxon>
        <taxon>Diptera</taxon>
        <taxon>Nematocera</taxon>
        <taxon>Psychodoidea</taxon>
        <taxon>Psychodidae</taxon>
        <taxon>Lutzomyia</taxon>
        <taxon>Lutzomyia</taxon>
    </lineage>
</organism>
<protein>
    <recommendedName>
        <fullName evidence="7">Yellow-related salivary protein LJM111</fullName>
    </recommendedName>
    <alternativeName>
        <fullName evidence="5 6">LJM111</fullName>
    </alternativeName>
    <alternativeName>
        <fullName evidence="4">LJM111_Clu22</fullName>
    </alternativeName>
</protein>
<name>YP111_LUTLO</name>
<proteinExistence type="evidence at protein level"/>
<comment type="function">
    <text evidence="2 3 7">Probably modulates blood feeding of sand flies on vertebrate species by binding and sequestering different mediators involved in the host response (Probable). Binds biogenic amines (PubMed:21795673). Binds adrenaline and noradrenaline with high affinity (PubMed:21795673). Binds serotonin (PubMed:21795673). Binds dopamine and octopamine (PubMed:21795673). Exhibits anti-inflammatory effects in the host: reduces IL17A, TNF-alpha (TNF) and IFN-gamma (IFNG) production by host lymph node cells, suppresses expression of MHC-II and CD86, reduces TNF-alpha production and increases IL10 production, in host bone marrow-derived dendritic cells (BMDCs) stimulated by lipopolysaccharides (PubMed:22366405). Reduces pain in mouse mechanical hypernociception model (PubMed:22366405).</text>
</comment>
<comment type="subcellular location">
    <subcellularLocation>
        <location evidence="7">Secreted</location>
    </subcellularLocation>
</comment>
<comment type="tissue specificity">
    <text evidence="1">Salivary gland (at protein level).</text>
</comment>
<comment type="similarity">
    <text evidence="7">Belongs to the major royal jelly protein family.</text>
</comment>
<keyword id="KW-0903">Direct protein sequencing</keyword>
<keyword id="KW-0964">Secreted</keyword>
<keyword id="KW-0732">Signal</keyword>
<dbReference type="EMBL" id="DQ192488">
    <property type="protein sequence ID" value="ABB00904.1"/>
    <property type="molecule type" value="mRNA"/>
</dbReference>
<dbReference type="RefSeq" id="XP_055680124.1">
    <property type="nucleotide sequence ID" value="XM_055824149.1"/>
</dbReference>
<dbReference type="SMR" id="Q07CZ7"/>
<dbReference type="EnsemblMetazoa" id="LLONM1_011624.R19420">
    <property type="protein sequence ID" value="LLONM1_011624.P19420"/>
    <property type="gene ID" value="LLONM1_011624"/>
</dbReference>
<dbReference type="GeneID" id="129788128"/>
<dbReference type="VEuPathDB" id="VectorBase:LLOJ001468"/>
<dbReference type="VEuPathDB" id="VectorBase:LLONM1_011624"/>
<dbReference type="OrthoDB" id="7776143at2759"/>
<dbReference type="Proteomes" id="UP000092461">
    <property type="component" value="Unplaced"/>
</dbReference>
<dbReference type="GO" id="GO:0005576">
    <property type="term" value="C:extracellular region"/>
    <property type="evidence" value="ECO:0007669"/>
    <property type="project" value="UniProtKB-SubCell"/>
</dbReference>
<dbReference type="Gene3D" id="2.120.10.30">
    <property type="entry name" value="TolB, C-terminal domain"/>
    <property type="match status" value="1"/>
</dbReference>
<dbReference type="InterPro" id="IPR011042">
    <property type="entry name" value="6-blade_b-propeller_TolB-like"/>
</dbReference>
<dbReference type="InterPro" id="IPR017996">
    <property type="entry name" value="Royal_jelly/protein_yellow"/>
</dbReference>
<dbReference type="PANTHER" id="PTHR10009:SF18">
    <property type="entry name" value="PROTEIN YELLOW-LIKE PROTEIN"/>
    <property type="match status" value="1"/>
</dbReference>
<dbReference type="PANTHER" id="PTHR10009">
    <property type="entry name" value="PROTEIN YELLOW-RELATED"/>
    <property type="match status" value="1"/>
</dbReference>
<dbReference type="Pfam" id="PF03022">
    <property type="entry name" value="MRJP"/>
    <property type="match status" value="1"/>
</dbReference>
<dbReference type="SUPFAM" id="SSF75011">
    <property type="entry name" value="3-carboxy-cis,cis-mucoante lactonizing enzyme"/>
    <property type="match status" value="1"/>
</dbReference>
<sequence>MKLFFFLYTFGLVQTIFGVEIKQGFKWNKILYEGDTSENFNPDNNILTAFAYDPESQKLFLTVPRKYPETMYTLAEVDTEKNSFESGDTSPLLGKFSGHETGKELTSVYQPVIDECHRLWVVDVGSVERNSDGTEGQPEHNPTLVAYDLKEANYPEVIRYTFPDNSIEKPTFLGGFAVDVVKPDECSETFVYITNFLTNALIVYDHKNKDSWTVQDSTFGPDKKSKFDHDGQQYEYEAGIFGITLGERDNEGNRQAYYLVASSTKLHSINTKELKQKGSKVNANYLGDRGESTDAIGLVYDPKTKTIFFVESNSKRVSCWNTQETLNKDKIDVIYHNADFSFGTDISIDSQDNLWFLANGLPPLENSDKFVFTKPRYQIFKVNIQEAIAGTKCEKNL</sequence>
<evidence type="ECO:0000269" key="1">
    <source>
    </source>
</evidence>
<evidence type="ECO:0000269" key="2">
    <source>
    </source>
</evidence>
<evidence type="ECO:0000269" key="3">
    <source>
    </source>
</evidence>
<evidence type="ECO:0000303" key="4">
    <source>
    </source>
</evidence>
<evidence type="ECO:0000303" key="5">
    <source>
    </source>
</evidence>
<evidence type="ECO:0000303" key="6">
    <source>
    </source>
</evidence>
<evidence type="ECO:0000305" key="7"/>
<evidence type="ECO:0000312" key="8">
    <source>
        <dbReference type="EMBL" id="ABB00904.1"/>
    </source>
</evidence>
<feature type="signal peptide" evidence="1">
    <location>
        <begin position="1"/>
        <end position="18"/>
    </location>
</feature>
<feature type="chain" id="PRO_5004165609" description="Yellow-related salivary protein LJM111" evidence="7">
    <location>
        <begin position="19"/>
        <end position="397"/>
    </location>
</feature>
<accession>Q07CZ7</accession>
<reference evidence="8" key="1">
    <citation type="journal article" date="2004" name="J. Exp. Biol.">
        <title>Identification of the most abundant secreted proteins from the salivary glands of the sand fly Lutzomyia longipalpis, vector of Leishmania chagasi.</title>
        <authorList>
            <person name="Valenzuela J.G."/>
            <person name="Garfield M."/>
            <person name="Rowton E.D."/>
            <person name="Pham V.M."/>
        </authorList>
    </citation>
    <scope>NUCLEOTIDE SEQUENCE [LARGE SCALE MRNA]</scope>
    <scope>PROTEIN SEQUENCE OF 19-30</scope>
    <scope>TISSUE SPECIFICITY</scope>
    <source>
        <tissue evidence="4">Salivary gland</tissue>
    </source>
</reference>
<reference evidence="7" key="2">
    <citation type="journal article" date="2011" name="J. Biol. Chem.">
        <title>Structure and function of a 'yellow' protein from saliva of the sand fly Lutzomyia longipalpis that confers protective immunity against Leishmania major infection.</title>
        <authorList>
            <person name="Xu X."/>
            <person name="Oliveira F."/>
            <person name="Chang B.W."/>
            <person name="Collin N."/>
            <person name="Gomes R."/>
            <person name="Teixeira C."/>
            <person name="Reynoso D."/>
            <person name="My Pham V."/>
            <person name="Elnaiem D.E."/>
            <person name="Kamhawi S."/>
            <person name="Ribeiro J.M."/>
            <person name="Valenzuela J.G."/>
            <person name="Andersen J.F."/>
        </authorList>
    </citation>
    <scope>FUNCTION</scope>
</reference>
<reference evidence="7" key="3">
    <citation type="journal article" date="2012" name="Int. Immunopharmacol.">
        <title>The protein LJM 111 from Lutzomyia longipalpis salivary gland extract (SGE) accounts for the SGE-inhibitory effects upon inflammatory parameters in experimental arthritis model.</title>
        <authorList>
            <person name="Grespan R."/>
            <person name="Lemos H.P."/>
            <person name="Carregaro V."/>
            <person name="Verri W.A. Jr."/>
            <person name="Souto F.O."/>
            <person name="de Oliveira C.J."/>
            <person name="Teixeira C."/>
            <person name="Ribeiro J.M."/>
            <person name="Valenzuela J.G."/>
            <person name="Cunha F.Q."/>
        </authorList>
    </citation>
    <scope>FUNCTION</scope>
</reference>